<evidence type="ECO:0000250" key="1"/>
<evidence type="ECO:0000305" key="2"/>
<accession>Q9Y9J0</accession>
<organism>
    <name type="scientific">Aeropyrum pernix (strain ATCC 700893 / DSM 11879 / JCM 9820 / NBRC 100138 / K1)</name>
    <dbReference type="NCBI Taxonomy" id="272557"/>
    <lineage>
        <taxon>Archaea</taxon>
        <taxon>Thermoproteota</taxon>
        <taxon>Thermoprotei</taxon>
        <taxon>Desulfurococcales</taxon>
        <taxon>Desulfurococcaceae</taxon>
        <taxon>Aeropyrum</taxon>
    </lineage>
</organism>
<reference key="1">
    <citation type="journal article" date="1999" name="DNA Res.">
        <title>Complete genome sequence of an aerobic hyper-thermophilic crenarchaeon, Aeropyrum pernix K1.</title>
        <authorList>
            <person name="Kawarabayasi Y."/>
            <person name="Hino Y."/>
            <person name="Horikawa H."/>
            <person name="Yamazaki S."/>
            <person name="Haikawa Y."/>
            <person name="Jin-no K."/>
            <person name="Takahashi M."/>
            <person name="Sekine M."/>
            <person name="Baba S."/>
            <person name="Ankai A."/>
            <person name="Kosugi H."/>
            <person name="Hosoyama A."/>
            <person name="Fukui S."/>
            <person name="Nagai Y."/>
            <person name="Nishijima K."/>
            <person name="Nakazawa H."/>
            <person name="Takamiya M."/>
            <person name="Masuda S."/>
            <person name="Funahashi T."/>
            <person name="Tanaka T."/>
            <person name="Kudoh Y."/>
            <person name="Yamazaki J."/>
            <person name="Kushida N."/>
            <person name="Oguchi A."/>
            <person name="Aoki K."/>
            <person name="Kubota K."/>
            <person name="Nakamura Y."/>
            <person name="Nomura N."/>
            <person name="Sako Y."/>
            <person name="Kikuchi H."/>
        </authorList>
    </citation>
    <scope>NUCLEOTIDE SEQUENCE [LARGE SCALE GENOMIC DNA]</scope>
    <source>
        <strain>ATCC 700893 / DSM 11879 / JCM 9820 / NBRC 100138 / K1</strain>
    </source>
</reference>
<dbReference type="EC" id="2.5.1.61"/>
<dbReference type="EMBL" id="BA000002">
    <property type="protein sequence ID" value="BAA81310.2"/>
    <property type="molecule type" value="Genomic_DNA"/>
</dbReference>
<dbReference type="PIR" id="F72456">
    <property type="entry name" value="F72456"/>
</dbReference>
<dbReference type="SMR" id="Q9Y9J0"/>
<dbReference type="STRING" id="272557.APE_2298.1"/>
<dbReference type="EnsemblBacteria" id="BAA81310">
    <property type="protein sequence ID" value="BAA81310"/>
    <property type="gene ID" value="APE_2298.1"/>
</dbReference>
<dbReference type="KEGG" id="ape:APE_2298.1"/>
<dbReference type="PATRIC" id="fig|272557.25.peg.1532"/>
<dbReference type="eggNOG" id="arCOG04299">
    <property type="taxonomic scope" value="Archaea"/>
</dbReference>
<dbReference type="UniPathway" id="UPA00251">
    <property type="reaction ID" value="UER00319"/>
</dbReference>
<dbReference type="Proteomes" id="UP000002518">
    <property type="component" value="Chromosome"/>
</dbReference>
<dbReference type="GO" id="GO:0005737">
    <property type="term" value="C:cytoplasm"/>
    <property type="evidence" value="ECO:0007669"/>
    <property type="project" value="TreeGrafter"/>
</dbReference>
<dbReference type="GO" id="GO:0004418">
    <property type="term" value="F:hydroxymethylbilane synthase activity"/>
    <property type="evidence" value="ECO:0007669"/>
    <property type="project" value="UniProtKB-UniRule"/>
</dbReference>
<dbReference type="GO" id="GO:0006782">
    <property type="term" value="P:protoporphyrinogen IX biosynthetic process"/>
    <property type="evidence" value="ECO:0007669"/>
    <property type="project" value="UniProtKB-UniRule"/>
</dbReference>
<dbReference type="CDD" id="cd13644">
    <property type="entry name" value="PBP2_HemC_archaea"/>
    <property type="match status" value="1"/>
</dbReference>
<dbReference type="Gene3D" id="3.40.190.10">
    <property type="entry name" value="Periplasmic binding protein-like II"/>
    <property type="match status" value="2"/>
</dbReference>
<dbReference type="Gene3D" id="3.30.160.40">
    <property type="entry name" value="Porphobilinogen deaminase, C-terminal domain"/>
    <property type="match status" value="1"/>
</dbReference>
<dbReference type="HAMAP" id="MF_00260">
    <property type="entry name" value="Porphobil_deam"/>
    <property type="match status" value="1"/>
</dbReference>
<dbReference type="InterPro" id="IPR000860">
    <property type="entry name" value="HemC"/>
</dbReference>
<dbReference type="InterPro" id="IPR022419">
    <property type="entry name" value="Porphobilin_deaminase_cofac_BS"/>
</dbReference>
<dbReference type="InterPro" id="IPR022417">
    <property type="entry name" value="Porphobilin_deaminase_N"/>
</dbReference>
<dbReference type="InterPro" id="IPR022418">
    <property type="entry name" value="Porphobilinogen_deaminase_C"/>
</dbReference>
<dbReference type="InterPro" id="IPR036803">
    <property type="entry name" value="Porphobilinogen_deaminase_C_sf"/>
</dbReference>
<dbReference type="NCBIfam" id="TIGR00212">
    <property type="entry name" value="hemC"/>
    <property type="match status" value="1"/>
</dbReference>
<dbReference type="PANTHER" id="PTHR11557">
    <property type="entry name" value="PORPHOBILINOGEN DEAMINASE"/>
    <property type="match status" value="1"/>
</dbReference>
<dbReference type="PANTHER" id="PTHR11557:SF0">
    <property type="entry name" value="PORPHOBILINOGEN DEAMINASE"/>
    <property type="match status" value="1"/>
</dbReference>
<dbReference type="Pfam" id="PF01379">
    <property type="entry name" value="Porphobil_deam"/>
    <property type="match status" value="1"/>
</dbReference>
<dbReference type="Pfam" id="PF03900">
    <property type="entry name" value="Porphobil_deamC"/>
    <property type="match status" value="1"/>
</dbReference>
<dbReference type="PIRSF" id="PIRSF001438">
    <property type="entry name" value="4pyrrol_synth_OHMeBilane_synth"/>
    <property type="match status" value="1"/>
</dbReference>
<dbReference type="PRINTS" id="PR00151">
    <property type="entry name" value="PORPHBDMNASE"/>
</dbReference>
<dbReference type="SUPFAM" id="SSF53850">
    <property type="entry name" value="Periplasmic binding protein-like II"/>
    <property type="match status" value="1"/>
</dbReference>
<dbReference type="SUPFAM" id="SSF54782">
    <property type="entry name" value="Porphobilinogen deaminase (hydroxymethylbilane synthase), C-terminal domain"/>
    <property type="match status" value="1"/>
</dbReference>
<dbReference type="PROSITE" id="PS00533">
    <property type="entry name" value="PORPHOBILINOGEN_DEAM"/>
    <property type="match status" value="1"/>
</dbReference>
<sequence>MRVRVAARGSRLSLLQVEQALEELSRYAGVSMHWEVVRVKSAGDVWSDRPLESIGVVGVFTREVDRAVASGAADIAVHSLKDMPTSGYGGPLKIVYIASRPSARDALISRQGPGRVEDLEPGSTLGTSSARRRALSLHYNPRIRVENLRGNLDTRLRKLREGLYDAIIASEAGLIRLGVDVEYTPLDPSYFPPAPGQGFVAVVARVGSNVEKMLRDLDKPPWWHVAWAERGVLEGARAGCRTPVAAYAEPLGRSMVRVTAAALSPDGSRAYWARAEGRIEEARRIGVSLGEELSRVVEGWHKTGGGS</sequence>
<feature type="chain" id="PRO_0000143020" description="Probable porphobilinogen deaminase">
    <location>
        <begin position="1"/>
        <end position="307"/>
    </location>
</feature>
<feature type="modified residue" description="S-(dipyrrolylmethanemethyl)cysteine" evidence="1">
    <location>
        <position position="240"/>
    </location>
</feature>
<name>HEM3_AERPE</name>
<gene>
    <name type="primary">hemC</name>
    <name type="ordered locus">APE_2298.1</name>
</gene>
<proteinExistence type="inferred from homology"/>
<protein>
    <recommendedName>
        <fullName>Probable porphobilinogen deaminase</fullName>
        <shortName>PBG</shortName>
        <ecNumber>2.5.1.61</ecNumber>
    </recommendedName>
    <alternativeName>
        <fullName>Hydroxymethylbilane synthase</fullName>
        <shortName>HMBS</shortName>
    </alternativeName>
    <alternativeName>
        <fullName>Pre-uroporphyrinogen synthase</fullName>
    </alternativeName>
</protein>
<keyword id="KW-0627">Porphyrin biosynthesis</keyword>
<keyword id="KW-1185">Reference proteome</keyword>
<keyword id="KW-0808">Transferase</keyword>
<comment type="function">
    <text evidence="1">Tetrapolymerization of the monopyrrole PBG into the hydroxymethylbilane pre-uroporphyrinogen in several discrete steps.</text>
</comment>
<comment type="catalytic activity">
    <reaction>
        <text>4 porphobilinogen + H2O = hydroxymethylbilane + 4 NH4(+)</text>
        <dbReference type="Rhea" id="RHEA:13185"/>
        <dbReference type="ChEBI" id="CHEBI:15377"/>
        <dbReference type="ChEBI" id="CHEBI:28938"/>
        <dbReference type="ChEBI" id="CHEBI:57845"/>
        <dbReference type="ChEBI" id="CHEBI:58126"/>
        <dbReference type="EC" id="2.5.1.61"/>
    </reaction>
</comment>
<comment type="cofactor">
    <cofactor evidence="1">
        <name>dipyrromethane</name>
        <dbReference type="ChEBI" id="CHEBI:60342"/>
    </cofactor>
    <text evidence="1">Binds 1 dipyrromethane group covalently.</text>
</comment>
<comment type="pathway">
    <text>Porphyrin-containing compound metabolism; protoporphyrin-IX biosynthesis; coproporphyrinogen-III from 5-aminolevulinate: step 2/4.</text>
</comment>
<comment type="miscellaneous">
    <text evidence="1">The porphobilinogen subunits are added to the dipyrromethane group.</text>
</comment>
<comment type="similarity">
    <text evidence="2">Belongs to the HMBS family.</text>
</comment>